<feature type="chain" id="PRO_0000418694" description="CASP-like protein 5A2">
    <location>
        <begin position="1"/>
        <end position="203"/>
    </location>
</feature>
<feature type="topological domain" description="Cytoplasmic" evidence="2">
    <location>
        <begin position="1"/>
        <end position="63"/>
    </location>
</feature>
<feature type="transmembrane region" description="Helical" evidence="2">
    <location>
        <begin position="64"/>
        <end position="84"/>
    </location>
</feature>
<feature type="topological domain" description="Extracellular" evidence="2">
    <location>
        <begin position="85"/>
        <end position="94"/>
    </location>
</feature>
<feature type="transmembrane region" description="Helical" evidence="2">
    <location>
        <begin position="95"/>
        <end position="115"/>
    </location>
</feature>
<feature type="topological domain" description="Cytoplasmic" evidence="2">
    <location>
        <begin position="116"/>
        <end position="139"/>
    </location>
</feature>
<feature type="transmembrane region" description="Helical" evidence="2">
    <location>
        <begin position="140"/>
        <end position="160"/>
    </location>
</feature>
<feature type="topological domain" description="Extracellular" evidence="2">
    <location>
        <begin position="161"/>
        <end position="177"/>
    </location>
</feature>
<feature type="transmembrane region" description="Helical" evidence="2">
    <location>
        <begin position="178"/>
        <end position="198"/>
    </location>
</feature>
<feature type="topological domain" description="Cytoplasmic" evidence="2">
    <location>
        <begin position="199"/>
        <end position="203"/>
    </location>
</feature>
<feature type="region of interest" description="Disordered" evidence="3">
    <location>
        <begin position="39"/>
        <end position="58"/>
    </location>
</feature>
<accession>A2Z669</accession>
<reference key="1">
    <citation type="journal article" date="2005" name="PLoS Biol.">
        <title>The genomes of Oryza sativa: a history of duplications.</title>
        <authorList>
            <person name="Yu J."/>
            <person name="Wang J."/>
            <person name="Lin W."/>
            <person name="Li S."/>
            <person name="Li H."/>
            <person name="Zhou J."/>
            <person name="Ni P."/>
            <person name="Dong W."/>
            <person name="Hu S."/>
            <person name="Zeng C."/>
            <person name="Zhang J."/>
            <person name="Zhang Y."/>
            <person name="Li R."/>
            <person name="Xu Z."/>
            <person name="Li S."/>
            <person name="Li X."/>
            <person name="Zheng H."/>
            <person name="Cong L."/>
            <person name="Lin L."/>
            <person name="Yin J."/>
            <person name="Geng J."/>
            <person name="Li G."/>
            <person name="Shi J."/>
            <person name="Liu J."/>
            <person name="Lv H."/>
            <person name="Li J."/>
            <person name="Wang J."/>
            <person name="Deng Y."/>
            <person name="Ran L."/>
            <person name="Shi X."/>
            <person name="Wang X."/>
            <person name="Wu Q."/>
            <person name="Li C."/>
            <person name="Ren X."/>
            <person name="Wang J."/>
            <person name="Wang X."/>
            <person name="Li D."/>
            <person name="Liu D."/>
            <person name="Zhang X."/>
            <person name="Ji Z."/>
            <person name="Zhao W."/>
            <person name="Sun Y."/>
            <person name="Zhang Z."/>
            <person name="Bao J."/>
            <person name="Han Y."/>
            <person name="Dong L."/>
            <person name="Ji J."/>
            <person name="Chen P."/>
            <person name="Wu S."/>
            <person name="Liu J."/>
            <person name="Xiao Y."/>
            <person name="Bu D."/>
            <person name="Tan J."/>
            <person name="Yang L."/>
            <person name="Ye C."/>
            <person name="Zhang J."/>
            <person name="Xu J."/>
            <person name="Zhou Y."/>
            <person name="Yu Y."/>
            <person name="Zhang B."/>
            <person name="Zhuang S."/>
            <person name="Wei H."/>
            <person name="Liu B."/>
            <person name="Lei M."/>
            <person name="Yu H."/>
            <person name="Li Y."/>
            <person name="Xu H."/>
            <person name="Wei S."/>
            <person name="He X."/>
            <person name="Fang L."/>
            <person name="Zhang Z."/>
            <person name="Zhang Y."/>
            <person name="Huang X."/>
            <person name="Su Z."/>
            <person name="Tong W."/>
            <person name="Li J."/>
            <person name="Tong Z."/>
            <person name="Li S."/>
            <person name="Ye J."/>
            <person name="Wang L."/>
            <person name="Fang L."/>
            <person name="Lei T."/>
            <person name="Chen C.-S."/>
            <person name="Chen H.-C."/>
            <person name="Xu Z."/>
            <person name="Li H."/>
            <person name="Huang H."/>
            <person name="Zhang F."/>
            <person name="Xu H."/>
            <person name="Li N."/>
            <person name="Zhao C."/>
            <person name="Li S."/>
            <person name="Dong L."/>
            <person name="Huang Y."/>
            <person name="Li L."/>
            <person name="Xi Y."/>
            <person name="Qi Q."/>
            <person name="Li W."/>
            <person name="Zhang B."/>
            <person name="Hu W."/>
            <person name="Zhang Y."/>
            <person name="Tian X."/>
            <person name="Jiao Y."/>
            <person name="Liang X."/>
            <person name="Jin J."/>
            <person name="Gao L."/>
            <person name="Zheng W."/>
            <person name="Hao B."/>
            <person name="Liu S.-M."/>
            <person name="Wang W."/>
            <person name="Yuan L."/>
            <person name="Cao M."/>
            <person name="McDermott J."/>
            <person name="Samudrala R."/>
            <person name="Wang J."/>
            <person name="Wong G.K.-S."/>
            <person name="Yang H."/>
        </authorList>
    </citation>
    <scope>NUCLEOTIDE SEQUENCE [LARGE SCALE GENOMIC DNA]</scope>
    <source>
        <strain>cv. 93-11</strain>
    </source>
</reference>
<reference key="2">
    <citation type="journal article" date="2014" name="Plant Physiol.">
        <title>Functional and evolutionary analysis of the CASPARIAN STRIP MEMBRANE DOMAIN PROTEIN family.</title>
        <authorList>
            <person name="Roppolo D."/>
            <person name="Boeckmann B."/>
            <person name="Pfister A."/>
            <person name="Boutet E."/>
            <person name="Rubio M.C."/>
            <person name="Denervaud-Tendon V."/>
            <person name="Vermeer J.E."/>
            <person name="Gheyselinck J."/>
            <person name="Xenarios I."/>
            <person name="Geldner N."/>
        </authorList>
    </citation>
    <scope>GENE FAMILY</scope>
    <scope>NOMENCLATURE</scope>
</reference>
<comment type="subunit">
    <text evidence="1">Homodimer and heterodimers.</text>
</comment>
<comment type="subcellular location">
    <subcellularLocation>
        <location evidence="1">Cell membrane</location>
        <topology evidence="1">Multi-pass membrane protein</topology>
    </subcellularLocation>
</comment>
<comment type="similarity">
    <text evidence="4">Belongs to the Casparian strip membrane proteins (CASP) family.</text>
</comment>
<keyword id="KW-1003">Cell membrane</keyword>
<keyword id="KW-0472">Membrane</keyword>
<keyword id="KW-1185">Reference proteome</keyword>
<keyword id="KW-0812">Transmembrane</keyword>
<keyword id="KW-1133">Transmembrane helix</keyword>
<organism>
    <name type="scientific">Oryza sativa subsp. indica</name>
    <name type="common">Rice</name>
    <dbReference type="NCBI Taxonomy" id="39946"/>
    <lineage>
        <taxon>Eukaryota</taxon>
        <taxon>Viridiplantae</taxon>
        <taxon>Streptophyta</taxon>
        <taxon>Embryophyta</taxon>
        <taxon>Tracheophyta</taxon>
        <taxon>Spermatophyta</taxon>
        <taxon>Magnoliopsida</taxon>
        <taxon>Liliopsida</taxon>
        <taxon>Poales</taxon>
        <taxon>Poaceae</taxon>
        <taxon>BOP clade</taxon>
        <taxon>Oryzoideae</taxon>
        <taxon>Oryzeae</taxon>
        <taxon>Oryzinae</taxon>
        <taxon>Oryza</taxon>
        <taxon>Oryza sativa</taxon>
    </lineage>
</organism>
<name>CSPLT_ORYSI</name>
<protein>
    <recommendedName>
        <fullName>CASP-like protein 5A2</fullName>
        <shortName>OsCASPL5A2</shortName>
    </recommendedName>
</protein>
<dbReference type="EMBL" id="CM000135">
    <property type="protein sequence ID" value="EAY78103.1"/>
    <property type="molecule type" value="Genomic_DNA"/>
</dbReference>
<dbReference type="STRING" id="39946.A2Z669"/>
<dbReference type="EnsemblPlants" id="BGIOSGA032113-TA">
    <property type="protein sequence ID" value="BGIOSGA032113-PA"/>
    <property type="gene ID" value="BGIOSGA032113"/>
</dbReference>
<dbReference type="Gramene" id="BGIOSGA032113-TA">
    <property type="protein sequence ID" value="BGIOSGA032113-PA"/>
    <property type="gene ID" value="BGIOSGA032113"/>
</dbReference>
<dbReference type="HOGENOM" id="CLU_103961_0_0_1"/>
<dbReference type="OMA" id="RNCKVIC"/>
<dbReference type="Proteomes" id="UP000007015">
    <property type="component" value="Chromosome 10"/>
</dbReference>
<dbReference type="GO" id="GO:0005886">
    <property type="term" value="C:plasma membrane"/>
    <property type="evidence" value="ECO:0007669"/>
    <property type="project" value="UniProtKB-SubCell"/>
</dbReference>
<dbReference type="InterPro" id="IPR006702">
    <property type="entry name" value="CASP_dom"/>
</dbReference>
<dbReference type="InterPro" id="IPR045009">
    <property type="entry name" value="CASPL-5"/>
</dbReference>
<dbReference type="PANTHER" id="PTHR32021:SF19">
    <property type="entry name" value="CASP-LIKE PROTEIN 5A2"/>
    <property type="match status" value="1"/>
</dbReference>
<dbReference type="PANTHER" id="PTHR32021">
    <property type="entry name" value="CASP-LIKE PROTEIN 5B3"/>
    <property type="match status" value="1"/>
</dbReference>
<dbReference type="Pfam" id="PF04535">
    <property type="entry name" value="CASP_dom"/>
    <property type="match status" value="1"/>
</dbReference>
<sequence length="203" mass="20439">MRASRPVVHPVEAPPPAALAVAAAAVAVEAGVGAGGGAAAHGGENAQPRGVRMKDPPGAPGTPGGLGLRLVQAFFAAAALAVMASTDDFPSVSAFCYLVAAAILQCLWSLSLAVVDIYALLVKRSLRNPQAVCIFTIGDGITGTLTLGAACASAGITVLIGNDLNICANNHCASFETATAMAFISWFALAPSCVLNFWSMASR</sequence>
<proteinExistence type="inferred from homology"/>
<evidence type="ECO:0000250" key="1"/>
<evidence type="ECO:0000255" key="2"/>
<evidence type="ECO:0000256" key="3">
    <source>
        <dbReference type="SAM" id="MobiDB-lite"/>
    </source>
</evidence>
<evidence type="ECO:0000305" key="4"/>
<gene>
    <name type="ORF">OsI_33147</name>
</gene>